<dbReference type="EC" id="2.7.1.11" evidence="1"/>
<dbReference type="EMBL" id="CP000517">
    <property type="protein sequence ID" value="ABX27110.1"/>
    <property type="molecule type" value="Genomic_DNA"/>
</dbReference>
<dbReference type="RefSeq" id="WP_012211810.1">
    <property type="nucleotide sequence ID" value="NC_010080.1"/>
</dbReference>
<dbReference type="SMR" id="A8YV22"/>
<dbReference type="GeneID" id="83725067"/>
<dbReference type="KEGG" id="lhe:lhv_1049"/>
<dbReference type="eggNOG" id="COG0205">
    <property type="taxonomic scope" value="Bacteria"/>
</dbReference>
<dbReference type="HOGENOM" id="CLU_020655_0_1_9"/>
<dbReference type="UniPathway" id="UPA00109">
    <property type="reaction ID" value="UER00182"/>
</dbReference>
<dbReference type="Proteomes" id="UP000000790">
    <property type="component" value="Chromosome"/>
</dbReference>
<dbReference type="GO" id="GO:0005945">
    <property type="term" value="C:6-phosphofructokinase complex"/>
    <property type="evidence" value="ECO:0007669"/>
    <property type="project" value="TreeGrafter"/>
</dbReference>
<dbReference type="GO" id="GO:0003872">
    <property type="term" value="F:6-phosphofructokinase activity"/>
    <property type="evidence" value="ECO:0007669"/>
    <property type="project" value="UniProtKB-UniRule"/>
</dbReference>
<dbReference type="GO" id="GO:0016208">
    <property type="term" value="F:AMP binding"/>
    <property type="evidence" value="ECO:0007669"/>
    <property type="project" value="TreeGrafter"/>
</dbReference>
<dbReference type="GO" id="GO:0005524">
    <property type="term" value="F:ATP binding"/>
    <property type="evidence" value="ECO:0007669"/>
    <property type="project" value="UniProtKB-KW"/>
</dbReference>
<dbReference type="GO" id="GO:0070095">
    <property type="term" value="F:fructose-6-phosphate binding"/>
    <property type="evidence" value="ECO:0007669"/>
    <property type="project" value="TreeGrafter"/>
</dbReference>
<dbReference type="GO" id="GO:0042802">
    <property type="term" value="F:identical protein binding"/>
    <property type="evidence" value="ECO:0007669"/>
    <property type="project" value="TreeGrafter"/>
</dbReference>
<dbReference type="GO" id="GO:0046872">
    <property type="term" value="F:metal ion binding"/>
    <property type="evidence" value="ECO:0007669"/>
    <property type="project" value="UniProtKB-KW"/>
</dbReference>
<dbReference type="GO" id="GO:0048029">
    <property type="term" value="F:monosaccharide binding"/>
    <property type="evidence" value="ECO:0007669"/>
    <property type="project" value="TreeGrafter"/>
</dbReference>
<dbReference type="GO" id="GO:0061621">
    <property type="term" value="P:canonical glycolysis"/>
    <property type="evidence" value="ECO:0007669"/>
    <property type="project" value="TreeGrafter"/>
</dbReference>
<dbReference type="GO" id="GO:0030388">
    <property type="term" value="P:fructose 1,6-bisphosphate metabolic process"/>
    <property type="evidence" value="ECO:0007669"/>
    <property type="project" value="TreeGrafter"/>
</dbReference>
<dbReference type="GO" id="GO:0006002">
    <property type="term" value="P:fructose 6-phosphate metabolic process"/>
    <property type="evidence" value="ECO:0007669"/>
    <property type="project" value="InterPro"/>
</dbReference>
<dbReference type="CDD" id="cd00763">
    <property type="entry name" value="Bacterial_PFK"/>
    <property type="match status" value="1"/>
</dbReference>
<dbReference type="FunFam" id="3.40.50.450:FF:000001">
    <property type="entry name" value="ATP-dependent 6-phosphofructokinase"/>
    <property type="match status" value="1"/>
</dbReference>
<dbReference type="FunFam" id="3.40.50.460:FF:000002">
    <property type="entry name" value="ATP-dependent 6-phosphofructokinase"/>
    <property type="match status" value="1"/>
</dbReference>
<dbReference type="Gene3D" id="3.40.50.450">
    <property type="match status" value="1"/>
</dbReference>
<dbReference type="Gene3D" id="3.40.50.460">
    <property type="entry name" value="Phosphofructokinase domain"/>
    <property type="match status" value="1"/>
</dbReference>
<dbReference type="HAMAP" id="MF_00339">
    <property type="entry name" value="Phosphofructokinase_I_B1"/>
    <property type="match status" value="1"/>
</dbReference>
<dbReference type="InterPro" id="IPR022953">
    <property type="entry name" value="ATP_PFK"/>
</dbReference>
<dbReference type="InterPro" id="IPR012003">
    <property type="entry name" value="ATP_PFK_prok-type"/>
</dbReference>
<dbReference type="InterPro" id="IPR012828">
    <property type="entry name" value="PFKA_ATP_prok"/>
</dbReference>
<dbReference type="InterPro" id="IPR015912">
    <property type="entry name" value="Phosphofructokinase_CS"/>
</dbReference>
<dbReference type="InterPro" id="IPR000023">
    <property type="entry name" value="Phosphofructokinase_dom"/>
</dbReference>
<dbReference type="InterPro" id="IPR035966">
    <property type="entry name" value="PKF_sf"/>
</dbReference>
<dbReference type="NCBIfam" id="TIGR02482">
    <property type="entry name" value="PFKA_ATP"/>
    <property type="match status" value="1"/>
</dbReference>
<dbReference type="NCBIfam" id="NF002872">
    <property type="entry name" value="PRK03202.1"/>
    <property type="match status" value="1"/>
</dbReference>
<dbReference type="PANTHER" id="PTHR13697:SF4">
    <property type="entry name" value="ATP-DEPENDENT 6-PHOSPHOFRUCTOKINASE"/>
    <property type="match status" value="1"/>
</dbReference>
<dbReference type="PANTHER" id="PTHR13697">
    <property type="entry name" value="PHOSPHOFRUCTOKINASE"/>
    <property type="match status" value="1"/>
</dbReference>
<dbReference type="Pfam" id="PF00365">
    <property type="entry name" value="PFK"/>
    <property type="match status" value="1"/>
</dbReference>
<dbReference type="PIRSF" id="PIRSF000532">
    <property type="entry name" value="ATP_PFK_prok"/>
    <property type="match status" value="1"/>
</dbReference>
<dbReference type="PRINTS" id="PR00476">
    <property type="entry name" value="PHFRCTKINASE"/>
</dbReference>
<dbReference type="SUPFAM" id="SSF53784">
    <property type="entry name" value="Phosphofructokinase"/>
    <property type="match status" value="1"/>
</dbReference>
<dbReference type="PROSITE" id="PS00433">
    <property type="entry name" value="PHOSPHOFRUCTOKINASE"/>
    <property type="match status" value="1"/>
</dbReference>
<organism>
    <name type="scientific">Lactobacillus helveticus (strain DPC 4571)</name>
    <dbReference type="NCBI Taxonomy" id="405566"/>
    <lineage>
        <taxon>Bacteria</taxon>
        <taxon>Bacillati</taxon>
        <taxon>Bacillota</taxon>
        <taxon>Bacilli</taxon>
        <taxon>Lactobacillales</taxon>
        <taxon>Lactobacillaceae</taxon>
        <taxon>Lactobacillus</taxon>
    </lineage>
</organism>
<comment type="function">
    <text evidence="1">Catalyzes the phosphorylation of D-fructose 6-phosphate to fructose 1,6-bisphosphate by ATP, the first committing step of glycolysis.</text>
</comment>
<comment type="catalytic activity">
    <reaction evidence="1">
        <text>beta-D-fructose 6-phosphate + ATP = beta-D-fructose 1,6-bisphosphate + ADP + H(+)</text>
        <dbReference type="Rhea" id="RHEA:16109"/>
        <dbReference type="ChEBI" id="CHEBI:15378"/>
        <dbReference type="ChEBI" id="CHEBI:30616"/>
        <dbReference type="ChEBI" id="CHEBI:32966"/>
        <dbReference type="ChEBI" id="CHEBI:57634"/>
        <dbReference type="ChEBI" id="CHEBI:456216"/>
        <dbReference type="EC" id="2.7.1.11"/>
    </reaction>
</comment>
<comment type="cofactor">
    <cofactor evidence="1">
        <name>Mg(2+)</name>
        <dbReference type="ChEBI" id="CHEBI:18420"/>
    </cofactor>
</comment>
<comment type="activity regulation">
    <text evidence="1">Allosterically activated by ADP and other diphosphonucleosides, and allosterically inhibited by phosphoenolpyruvate.</text>
</comment>
<comment type="pathway">
    <text evidence="1">Carbohydrate degradation; glycolysis; D-glyceraldehyde 3-phosphate and glycerone phosphate from D-glucose: step 3/4.</text>
</comment>
<comment type="subunit">
    <text evidence="1">Homotetramer.</text>
</comment>
<comment type="subcellular location">
    <subcellularLocation>
        <location evidence="1">Cytoplasm</location>
    </subcellularLocation>
</comment>
<comment type="similarity">
    <text evidence="1">Belongs to the phosphofructokinase type A (PFKA) family. ATP-dependent PFK group I subfamily. Prokaryotic clade 'B1' sub-subfamily.</text>
</comment>
<evidence type="ECO:0000255" key="1">
    <source>
        <dbReference type="HAMAP-Rule" id="MF_00339"/>
    </source>
</evidence>
<gene>
    <name evidence="1" type="primary">pfkA</name>
    <name type="ordered locus">lhv_1049</name>
</gene>
<proteinExistence type="inferred from homology"/>
<feature type="chain" id="PRO_1000072056" description="ATP-dependent 6-phosphofructokinase">
    <location>
        <begin position="1"/>
        <end position="320"/>
    </location>
</feature>
<feature type="active site" description="Proton acceptor" evidence="1">
    <location>
        <position position="127"/>
    </location>
</feature>
<feature type="binding site" evidence="1">
    <location>
        <position position="11"/>
    </location>
    <ligand>
        <name>ATP</name>
        <dbReference type="ChEBI" id="CHEBI:30616"/>
    </ligand>
</feature>
<feature type="binding site" evidence="1">
    <location>
        <begin position="21"/>
        <end position="25"/>
    </location>
    <ligand>
        <name>ADP</name>
        <dbReference type="ChEBI" id="CHEBI:456216"/>
        <note>allosteric activator; ligand shared between dimeric partners</note>
    </ligand>
</feature>
<feature type="binding site" evidence="1">
    <location>
        <begin position="72"/>
        <end position="73"/>
    </location>
    <ligand>
        <name>ATP</name>
        <dbReference type="ChEBI" id="CHEBI:30616"/>
    </ligand>
</feature>
<feature type="binding site" evidence="1">
    <location>
        <begin position="102"/>
        <end position="105"/>
    </location>
    <ligand>
        <name>ATP</name>
        <dbReference type="ChEBI" id="CHEBI:30616"/>
    </ligand>
</feature>
<feature type="binding site" evidence="1">
    <location>
        <position position="103"/>
    </location>
    <ligand>
        <name>Mg(2+)</name>
        <dbReference type="ChEBI" id="CHEBI:18420"/>
        <note>catalytic</note>
    </ligand>
</feature>
<feature type="binding site" description="in other chain" evidence="1">
    <location>
        <begin position="125"/>
        <end position="127"/>
    </location>
    <ligand>
        <name>substrate</name>
        <note>ligand shared between dimeric partners</note>
    </ligand>
</feature>
<feature type="binding site" description="in other chain" evidence="1">
    <location>
        <position position="154"/>
    </location>
    <ligand>
        <name>ADP</name>
        <dbReference type="ChEBI" id="CHEBI:456216"/>
        <note>allosteric activator; ligand shared between dimeric partners</note>
    </ligand>
</feature>
<feature type="binding site" evidence="1">
    <location>
        <position position="162"/>
    </location>
    <ligand>
        <name>substrate</name>
        <note>ligand shared between dimeric partners</note>
    </ligand>
</feature>
<feature type="binding site" description="in other chain" evidence="1">
    <location>
        <begin position="169"/>
        <end position="171"/>
    </location>
    <ligand>
        <name>substrate</name>
        <note>ligand shared between dimeric partners</note>
    </ligand>
</feature>
<feature type="binding site" description="in other chain" evidence="1">
    <location>
        <begin position="185"/>
        <end position="187"/>
    </location>
    <ligand>
        <name>ADP</name>
        <dbReference type="ChEBI" id="CHEBI:456216"/>
        <note>allosteric activator; ligand shared between dimeric partners</note>
    </ligand>
</feature>
<feature type="binding site" description="in other chain" evidence="1">
    <location>
        <begin position="213"/>
        <end position="215"/>
    </location>
    <ligand>
        <name>ADP</name>
        <dbReference type="ChEBI" id="CHEBI:456216"/>
        <note>allosteric activator; ligand shared between dimeric partners</note>
    </ligand>
</feature>
<feature type="binding site" description="in other chain" evidence="1">
    <location>
        <position position="222"/>
    </location>
    <ligand>
        <name>substrate</name>
        <note>ligand shared between dimeric partners</note>
    </ligand>
</feature>
<feature type="binding site" evidence="1">
    <location>
        <position position="243"/>
    </location>
    <ligand>
        <name>substrate</name>
        <note>ligand shared between dimeric partners</note>
    </ligand>
</feature>
<feature type="binding site" description="in other chain" evidence="1">
    <location>
        <begin position="249"/>
        <end position="252"/>
    </location>
    <ligand>
        <name>substrate</name>
        <note>ligand shared between dimeric partners</note>
    </ligand>
</feature>
<reference key="1">
    <citation type="journal article" date="2008" name="J. Bacteriol.">
        <title>Genome sequence of Lactobacillus helveticus: an organism distinguished by selective gene loss and IS element expansion.</title>
        <authorList>
            <person name="Callanan M."/>
            <person name="Kaleta P."/>
            <person name="O'Callaghan J."/>
            <person name="O'Sullivan O."/>
            <person name="Jordan K."/>
            <person name="McAuliffe O."/>
            <person name="Sangrador-Vegas A."/>
            <person name="Slattery L."/>
            <person name="Fitzgerald G.F."/>
            <person name="Beresford T."/>
            <person name="Ross R.P."/>
        </authorList>
    </citation>
    <scope>NUCLEOTIDE SEQUENCE [LARGE SCALE GENOMIC DNA]</scope>
    <source>
        <strain>DPC 4571</strain>
    </source>
</reference>
<protein>
    <recommendedName>
        <fullName evidence="1">ATP-dependent 6-phosphofructokinase</fullName>
        <shortName evidence="1">ATP-PFK</shortName>
        <shortName evidence="1">Phosphofructokinase</shortName>
        <ecNumber evidence="1">2.7.1.11</ecNumber>
    </recommendedName>
    <alternativeName>
        <fullName evidence="1">Phosphohexokinase</fullName>
    </alternativeName>
</protein>
<sequence>MKRIGILTSGGDAPGMNAAIRAVTKTAIHHGLEVFGIRYGFAGLVAGDFVPLTTENVDHKISEGGTFLYSARFPEFAQEEVQQKGVEQLKKHGIDAVIVIGGDGSYHGALALTRHGVNSVGLPGTIDNDIPYTDYTIGFDSACRTAMDAIDKIRDTASSHHRVFVVNVMGRECGDIAMRVGVASGADAIVIPERPYDVKEIAETITRGFADGKDHGIIVLAEGVMTADKFKDELLKYGDFDARANVLAHMQRGGSPTVTDRVNATKMGNYAVKLLLDGKGGLAVGMENGQLSTHDILDLFDGKHHGDYALLDVNEEMTKY</sequence>
<keyword id="KW-0021">Allosteric enzyme</keyword>
<keyword id="KW-0067">ATP-binding</keyword>
<keyword id="KW-0963">Cytoplasm</keyword>
<keyword id="KW-0324">Glycolysis</keyword>
<keyword id="KW-0418">Kinase</keyword>
<keyword id="KW-0460">Magnesium</keyword>
<keyword id="KW-0479">Metal-binding</keyword>
<keyword id="KW-0547">Nucleotide-binding</keyword>
<keyword id="KW-0808">Transferase</keyword>
<name>PFKA_LACH4</name>
<accession>A8YV22</accession>